<accession>A1KG35</accession>
<proteinExistence type="inferred from homology"/>
<comment type="function">
    <text evidence="1">Methyltransferase required for the conversion of demethylmenaquinol (DMKH2) to menaquinol (MKH2).</text>
</comment>
<comment type="catalytic activity">
    <reaction evidence="1">
        <text>a 2-demethylmenaquinol + S-adenosyl-L-methionine = a menaquinol + S-adenosyl-L-homocysteine + H(+)</text>
        <dbReference type="Rhea" id="RHEA:42640"/>
        <dbReference type="Rhea" id="RHEA-COMP:9539"/>
        <dbReference type="Rhea" id="RHEA-COMP:9563"/>
        <dbReference type="ChEBI" id="CHEBI:15378"/>
        <dbReference type="ChEBI" id="CHEBI:18151"/>
        <dbReference type="ChEBI" id="CHEBI:55437"/>
        <dbReference type="ChEBI" id="CHEBI:57856"/>
        <dbReference type="ChEBI" id="CHEBI:59789"/>
        <dbReference type="EC" id="2.1.1.163"/>
    </reaction>
</comment>
<comment type="pathway">
    <text evidence="1">Quinol/quinone metabolism; menaquinone biosynthesis; menaquinol from 1,4-dihydroxy-2-naphthoate: step 2/2.</text>
</comment>
<comment type="similarity">
    <text evidence="1">Belongs to the class I-like SAM-binding methyltransferase superfamily. MenG/UbiE family.</text>
</comment>
<feature type="chain" id="PRO_1000056257" description="Demethylmenaquinone methyltransferase">
    <location>
        <begin position="1"/>
        <end position="234"/>
    </location>
</feature>
<feature type="binding site" evidence="1">
    <location>
        <position position="62"/>
    </location>
    <ligand>
        <name>S-adenosyl-L-methionine</name>
        <dbReference type="ChEBI" id="CHEBI:59789"/>
    </ligand>
</feature>
<feature type="binding site" evidence="1">
    <location>
        <position position="80"/>
    </location>
    <ligand>
        <name>S-adenosyl-L-methionine</name>
        <dbReference type="ChEBI" id="CHEBI:59789"/>
    </ligand>
</feature>
<feature type="binding site" evidence="1">
    <location>
        <begin position="100"/>
        <end position="101"/>
    </location>
    <ligand>
        <name>S-adenosyl-L-methionine</name>
        <dbReference type="ChEBI" id="CHEBI:59789"/>
    </ligand>
</feature>
<feature type="binding site" evidence="1">
    <location>
        <position position="117"/>
    </location>
    <ligand>
        <name>S-adenosyl-L-methionine</name>
        <dbReference type="ChEBI" id="CHEBI:59789"/>
    </ligand>
</feature>
<gene>
    <name evidence="1" type="primary">menG</name>
    <name type="ordered locus">BCG_0603</name>
</gene>
<evidence type="ECO:0000255" key="1">
    <source>
        <dbReference type="HAMAP-Rule" id="MF_01813"/>
    </source>
</evidence>
<organism>
    <name type="scientific">Mycobacterium bovis (strain BCG / Pasteur 1173P2)</name>
    <dbReference type="NCBI Taxonomy" id="410289"/>
    <lineage>
        <taxon>Bacteria</taxon>
        <taxon>Bacillati</taxon>
        <taxon>Actinomycetota</taxon>
        <taxon>Actinomycetes</taxon>
        <taxon>Mycobacteriales</taxon>
        <taxon>Mycobacteriaceae</taxon>
        <taxon>Mycobacterium</taxon>
        <taxon>Mycobacterium tuberculosis complex</taxon>
    </lineage>
</organism>
<sequence length="234" mass="25299">MSRAALDKDPRDVASMFDGVARKYDLTNTVLSLGQDRYWRRATRSALRIGPGQKVLDLAAGTAVSTVELTKSGAWCVAADFSVGMLAAGAARKVPKVAGDATRLPFGDDVFDAVTISFGLRNVANQQAALREMARVTRPGGRLLVCEFSTPTNALFATAYKEYLMRALPRVARAVSSNPEAYEYLAESIRAWPDQAVLAHQISRAGWSGVRWRNLTGGIVALHAGYKPGKQTPQ</sequence>
<dbReference type="EC" id="2.1.1.163" evidence="1"/>
<dbReference type="EMBL" id="AM408590">
    <property type="protein sequence ID" value="CAL70588.1"/>
    <property type="molecule type" value="Genomic_DNA"/>
</dbReference>
<dbReference type="RefSeq" id="WP_003402936.1">
    <property type="nucleotide sequence ID" value="NC_008769.1"/>
</dbReference>
<dbReference type="SMR" id="A1KG35"/>
<dbReference type="KEGG" id="mbb:BCG_0603"/>
<dbReference type="HOGENOM" id="CLU_037990_0_0_11"/>
<dbReference type="UniPathway" id="UPA00079">
    <property type="reaction ID" value="UER00169"/>
</dbReference>
<dbReference type="Proteomes" id="UP000001472">
    <property type="component" value="Chromosome"/>
</dbReference>
<dbReference type="GO" id="GO:0043770">
    <property type="term" value="F:demethylmenaquinone methyltransferase activity"/>
    <property type="evidence" value="ECO:0007669"/>
    <property type="project" value="UniProtKB-UniRule"/>
</dbReference>
<dbReference type="GO" id="GO:0009234">
    <property type="term" value="P:menaquinone biosynthetic process"/>
    <property type="evidence" value="ECO:0007669"/>
    <property type="project" value="UniProtKB-UniRule"/>
</dbReference>
<dbReference type="GO" id="GO:0032259">
    <property type="term" value="P:methylation"/>
    <property type="evidence" value="ECO:0007669"/>
    <property type="project" value="UniProtKB-KW"/>
</dbReference>
<dbReference type="CDD" id="cd02440">
    <property type="entry name" value="AdoMet_MTases"/>
    <property type="match status" value="1"/>
</dbReference>
<dbReference type="FunFam" id="3.40.50.150:FF:000373">
    <property type="entry name" value="Demethylmenaquinone methyltransferase"/>
    <property type="match status" value="1"/>
</dbReference>
<dbReference type="Gene3D" id="3.40.50.150">
    <property type="entry name" value="Vaccinia Virus protein VP39"/>
    <property type="match status" value="1"/>
</dbReference>
<dbReference type="HAMAP" id="MF_01813">
    <property type="entry name" value="MenG_UbiE_methyltr"/>
    <property type="match status" value="1"/>
</dbReference>
<dbReference type="InterPro" id="IPR029063">
    <property type="entry name" value="SAM-dependent_MTases_sf"/>
</dbReference>
<dbReference type="InterPro" id="IPR004033">
    <property type="entry name" value="UbiE/COQ5_MeTrFase"/>
</dbReference>
<dbReference type="InterPro" id="IPR023576">
    <property type="entry name" value="UbiE/COQ5_MeTrFase_CS"/>
</dbReference>
<dbReference type="NCBIfam" id="TIGR01934">
    <property type="entry name" value="MenG_MenH_UbiE"/>
    <property type="match status" value="1"/>
</dbReference>
<dbReference type="NCBIfam" id="NF001241">
    <property type="entry name" value="PRK00216.1-2"/>
    <property type="match status" value="1"/>
</dbReference>
<dbReference type="PANTHER" id="PTHR43591:SF24">
    <property type="entry name" value="2-METHOXY-6-POLYPRENYL-1,4-BENZOQUINOL METHYLASE, MITOCHONDRIAL"/>
    <property type="match status" value="1"/>
</dbReference>
<dbReference type="PANTHER" id="PTHR43591">
    <property type="entry name" value="METHYLTRANSFERASE"/>
    <property type="match status" value="1"/>
</dbReference>
<dbReference type="Pfam" id="PF01209">
    <property type="entry name" value="Ubie_methyltran"/>
    <property type="match status" value="1"/>
</dbReference>
<dbReference type="SUPFAM" id="SSF53335">
    <property type="entry name" value="S-adenosyl-L-methionine-dependent methyltransferases"/>
    <property type="match status" value="1"/>
</dbReference>
<dbReference type="PROSITE" id="PS51608">
    <property type="entry name" value="SAM_MT_UBIE"/>
    <property type="match status" value="1"/>
</dbReference>
<dbReference type="PROSITE" id="PS01183">
    <property type="entry name" value="UBIE_1"/>
    <property type="match status" value="1"/>
</dbReference>
<dbReference type="PROSITE" id="PS01184">
    <property type="entry name" value="UBIE_2"/>
    <property type="match status" value="1"/>
</dbReference>
<name>MENG_MYCBP</name>
<reference key="1">
    <citation type="journal article" date="2007" name="Proc. Natl. Acad. Sci. U.S.A.">
        <title>Genome plasticity of BCG and impact on vaccine efficacy.</title>
        <authorList>
            <person name="Brosch R."/>
            <person name="Gordon S.V."/>
            <person name="Garnier T."/>
            <person name="Eiglmeier K."/>
            <person name="Frigui W."/>
            <person name="Valenti P."/>
            <person name="Dos Santos S."/>
            <person name="Duthoy S."/>
            <person name="Lacroix C."/>
            <person name="Garcia-Pelayo C."/>
            <person name="Inwald J.K."/>
            <person name="Golby P."/>
            <person name="Garcia J.N."/>
            <person name="Hewinson R.G."/>
            <person name="Behr M.A."/>
            <person name="Quail M.A."/>
            <person name="Churcher C."/>
            <person name="Barrell B.G."/>
            <person name="Parkhill J."/>
            <person name="Cole S.T."/>
        </authorList>
    </citation>
    <scope>NUCLEOTIDE SEQUENCE [LARGE SCALE GENOMIC DNA]</scope>
    <source>
        <strain>BCG / Pasteur 1173P2</strain>
    </source>
</reference>
<protein>
    <recommendedName>
        <fullName evidence="1">Demethylmenaquinone methyltransferase</fullName>
        <ecNumber evidence="1">2.1.1.163</ecNumber>
    </recommendedName>
</protein>
<keyword id="KW-0474">Menaquinone biosynthesis</keyword>
<keyword id="KW-0489">Methyltransferase</keyword>
<keyword id="KW-0949">S-adenosyl-L-methionine</keyword>
<keyword id="KW-0808">Transferase</keyword>